<protein>
    <recommendedName>
        <fullName>Uncharacterized lipoprotein SAB0393</fullName>
    </recommendedName>
</protein>
<reference key="1">
    <citation type="journal article" date="2007" name="PLoS ONE">
        <title>Molecular correlates of host specialization in Staphylococcus aureus.</title>
        <authorList>
            <person name="Herron-Olson L."/>
            <person name="Fitzgerald J.R."/>
            <person name="Musser J.M."/>
            <person name="Kapur V."/>
        </authorList>
    </citation>
    <scope>NUCLEOTIDE SEQUENCE [LARGE SCALE GENOMIC DNA]</scope>
    <source>
        <strain>bovine RF122 / ET3-1</strain>
    </source>
</reference>
<organism>
    <name type="scientific">Staphylococcus aureus (strain bovine RF122 / ET3-1)</name>
    <dbReference type="NCBI Taxonomy" id="273036"/>
    <lineage>
        <taxon>Bacteria</taxon>
        <taxon>Bacillati</taxon>
        <taxon>Bacillota</taxon>
        <taxon>Bacilli</taxon>
        <taxon>Bacillales</taxon>
        <taxon>Staphylococcaceae</taxon>
        <taxon>Staphylococcus</taxon>
    </lineage>
</organism>
<proteinExistence type="inferred from homology"/>
<accession>Q2YVQ7</accession>
<sequence>MNNFRQCALCIGTSVLILLVSGCSGVFDTPEDSKETQIKKSFAKTLDMYPIKNLEDLYDKEGYRDGEFKKDDKGMWTIYTDFAKSNKSDELDDEGMVLNLDRNTRTAKGYYFVKKFYEKDKFSDRKNYKVEMKNNKIILLDKVNDPNLKERIENFKFFGQYANFKDLENYNNGDVSINWNVPSYDVEYKMSNKDENVKQLRSRYNIPTDKAPMLKMHIDGDLKGSSVGYKRLEIDFSKEDRDISVIDYLSYKPAKK</sequence>
<feature type="signal peptide" evidence="1">
    <location>
        <begin position="1"/>
        <end position="22"/>
    </location>
</feature>
<feature type="chain" id="PRO_0000282098" description="Uncharacterized lipoprotein SAB0393">
    <location>
        <begin position="23"/>
        <end position="256"/>
    </location>
</feature>
<feature type="lipid moiety-binding region" description="N-palmitoyl cysteine" evidence="1">
    <location>
        <position position="23"/>
    </location>
</feature>
<feature type="lipid moiety-binding region" description="S-diacylglycerol cysteine" evidence="1">
    <location>
        <position position="23"/>
    </location>
</feature>
<gene>
    <name type="ordered locus">SAB0393</name>
</gene>
<evidence type="ECO:0000255" key="1">
    <source>
        <dbReference type="PROSITE-ProRule" id="PRU00303"/>
    </source>
</evidence>
<evidence type="ECO:0000305" key="2"/>
<comment type="subcellular location">
    <subcellularLocation>
        <location evidence="1">Cell membrane</location>
        <topology evidence="1">Lipid-anchor</topology>
    </subcellularLocation>
</comment>
<comment type="similarity">
    <text evidence="2">Belongs to the staphylococcal tandem lipoprotein family.</text>
</comment>
<name>Y393_STAAB</name>
<dbReference type="EMBL" id="AJ938182">
    <property type="protein sequence ID" value="CAI80081.1"/>
    <property type="molecule type" value="Genomic_DNA"/>
</dbReference>
<dbReference type="RefSeq" id="WP_001058900.1">
    <property type="nucleotide sequence ID" value="NC_007622.1"/>
</dbReference>
<dbReference type="SMR" id="Q2YVQ7"/>
<dbReference type="KEGG" id="sab:SAB0393"/>
<dbReference type="HOGENOM" id="CLU_071589_0_1_9"/>
<dbReference type="GO" id="GO:0005886">
    <property type="term" value="C:plasma membrane"/>
    <property type="evidence" value="ECO:0007669"/>
    <property type="project" value="UniProtKB-SubCell"/>
</dbReference>
<dbReference type="Gene3D" id="2.50.20.40">
    <property type="match status" value="1"/>
</dbReference>
<dbReference type="InterPro" id="IPR007595">
    <property type="entry name" value="Csa"/>
</dbReference>
<dbReference type="InterPro" id="IPR038641">
    <property type="entry name" value="Csa_sf"/>
</dbReference>
<dbReference type="NCBIfam" id="TIGR01742">
    <property type="entry name" value="SA_tandem_lipo"/>
    <property type="match status" value="1"/>
</dbReference>
<dbReference type="Pfam" id="PF04507">
    <property type="entry name" value="DUF576"/>
    <property type="match status" value="1"/>
</dbReference>
<dbReference type="PROSITE" id="PS51257">
    <property type="entry name" value="PROKAR_LIPOPROTEIN"/>
    <property type="match status" value="1"/>
</dbReference>
<keyword id="KW-1003">Cell membrane</keyword>
<keyword id="KW-0449">Lipoprotein</keyword>
<keyword id="KW-0472">Membrane</keyword>
<keyword id="KW-0564">Palmitate</keyword>
<keyword id="KW-0732">Signal</keyword>